<sequence length="457" mass="49449">MQKYISEARLLLALAIPVILAQIAQTAMGFVDTVMAGGYSATDMAAVAIGTSIWLPAILFGHGLLLALTPVIAQLNGSGRRERIAHQVRQGFWLAGFVSVLIMLVLWNAGYIIRSMENIDPALADKAVGYLRALLWGAPGYLFFQVARNQCEGLAKTKPGMVMGFIGLLVNIPVNYIFIYGHFGMPELSGVGCGVATAAVYWAMFLAMVSYIKRARSMRDIRNEKGTAKPDPAVMKRLIQLGLPIALALFFEVTLFAVVALLVSPLGIVDVAGHQIALNFSSLMFVLPMSLAAAVTIRVGYRLGQGSTLDAQTAARTGLMVGVCMATLTAIFTVSLREQIALLYNDNPEVVTLAAHLMLLAAVYQISDSIQVIGSGILRGYKDTRSIFYITFTAYWVLGLPSGYILALTDLVVEPMGPAGFWIGFIIGLTSAAIMMMLRMRFLQRLPSAIILQRASR</sequence>
<evidence type="ECO:0000255" key="1"/>
<evidence type="ECO:0000255" key="2">
    <source>
        <dbReference type="HAMAP-Rule" id="MF_00400"/>
    </source>
</evidence>
<name>MDTK_SHIDS</name>
<feature type="chain" id="PRO_0000279853" description="Multidrug resistance protein MdtK">
    <location>
        <begin position="1"/>
        <end position="457"/>
    </location>
</feature>
<feature type="topological domain" description="Cytoplasmic" evidence="1">
    <location>
        <begin position="1"/>
        <end position="10"/>
    </location>
</feature>
<feature type="transmembrane region" description="Helical" evidence="2">
    <location>
        <begin position="11"/>
        <end position="31"/>
    </location>
</feature>
<feature type="topological domain" description="Periplasmic" evidence="1">
    <location>
        <begin position="32"/>
        <end position="52"/>
    </location>
</feature>
<feature type="transmembrane region" description="Helical" evidence="2">
    <location>
        <begin position="53"/>
        <end position="73"/>
    </location>
</feature>
<feature type="topological domain" description="Cytoplasmic" evidence="1">
    <location>
        <begin position="74"/>
        <end position="92"/>
    </location>
</feature>
<feature type="transmembrane region" description="Helical" evidence="2">
    <location>
        <begin position="93"/>
        <end position="113"/>
    </location>
</feature>
<feature type="topological domain" description="Periplasmic" evidence="1">
    <location>
        <begin position="114"/>
        <end position="126"/>
    </location>
</feature>
<feature type="transmembrane region" description="Helical" evidence="2">
    <location>
        <begin position="127"/>
        <end position="147"/>
    </location>
</feature>
<feature type="topological domain" description="Cytoplasmic" evidence="1">
    <location>
        <begin position="148"/>
        <end position="159"/>
    </location>
</feature>
<feature type="transmembrane region" description="Helical" evidence="2">
    <location>
        <begin position="160"/>
        <end position="180"/>
    </location>
</feature>
<feature type="topological domain" description="Periplasmic" evidence="1">
    <location>
        <begin position="181"/>
        <end position="191"/>
    </location>
</feature>
<feature type="transmembrane region" description="Helical" evidence="2">
    <location>
        <begin position="192"/>
        <end position="212"/>
    </location>
</feature>
<feature type="topological domain" description="Cytoplasmic" evidence="1">
    <location>
        <begin position="213"/>
        <end position="242"/>
    </location>
</feature>
<feature type="transmembrane region" description="Helical" evidence="2">
    <location>
        <begin position="243"/>
        <end position="263"/>
    </location>
</feature>
<feature type="topological domain" description="Periplasmic" evidence="1">
    <location>
        <begin position="264"/>
        <end position="275"/>
    </location>
</feature>
<feature type="transmembrane region" description="Helical" evidence="2">
    <location>
        <begin position="276"/>
        <end position="296"/>
    </location>
</feature>
<feature type="topological domain" description="Cytoplasmic" evidence="1">
    <location>
        <begin position="297"/>
        <end position="313"/>
    </location>
</feature>
<feature type="transmembrane region" description="Helical" evidence="2">
    <location>
        <begin position="314"/>
        <end position="334"/>
    </location>
</feature>
<feature type="topological domain" description="Periplasmic" evidence="1">
    <location>
        <begin position="335"/>
        <end position="349"/>
    </location>
</feature>
<feature type="transmembrane region" description="Helical" evidence="2">
    <location>
        <begin position="350"/>
        <end position="370"/>
    </location>
</feature>
<feature type="topological domain" description="Cytoplasmic" evidence="1">
    <location>
        <begin position="371"/>
        <end position="386"/>
    </location>
</feature>
<feature type="transmembrane region" description="Helical" evidence="2">
    <location>
        <begin position="387"/>
        <end position="407"/>
    </location>
</feature>
<feature type="topological domain" description="Periplasmic" evidence="1">
    <location>
        <begin position="408"/>
        <end position="417"/>
    </location>
</feature>
<feature type="transmembrane region" description="Helical" evidence="2">
    <location>
        <begin position="418"/>
        <end position="438"/>
    </location>
</feature>
<feature type="topological domain" description="Cytoplasmic" evidence="1">
    <location>
        <begin position="439"/>
        <end position="457"/>
    </location>
</feature>
<gene>
    <name evidence="2" type="primary">mdtK</name>
    <name type="ordered locus">SDY_1890</name>
</gene>
<organism>
    <name type="scientific">Shigella dysenteriae serotype 1 (strain Sd197)</name>
    <dbReference type="NCBI Taxonomy" id="300267"/>
    <lineage>
        <taxon>Bacteria</taxon>
        <taxon>Pseudomonadati</taxon>
        <taxon>Pseudomonadota</taxon>
        <taxon>Gammaproteobacteria</taxon>
        <taxon>Enterobacterales</taxon>
        <taxon>Enterobacteriaceae</taxon>
        <taxon>Shigella</taxon>
    </lineage>
</organism>
<reference key="1">
    <citation type="journal article" date="2005" name="Nucleic Acids Res.">
        <title>Genome dynamics and diversity of Shigella species, the etiologic agents of bacillary dysentery.</title>
        <authorList>
            <person name="Yang F."/>
            <person name="Yang J."/>
            <person name="Zhang X."/>
            <person name="Chen L."/>
            <person name="Jiang Y."/>
            <person name="Yan Y."/>
            <person name="Tang X."/>
            <person name="Wang J."/>
            <person name="Xiong Z."/>
            <person name="Dong J."/>
            <person name="Xue Y."/>
            <person name="Zhu Y."/>
            <person name="Xu X."/>
            <person name="Sun L."/>
            <person name="Chen S."/>
            <person name="Nie H."/>
            <person name="Peng J."/>
            <person name="Xu J."/>
            <person name="Wang Y."/>
            <person name="Yuan Z."/>
            <person name="Wen Y."/>
            <person name="Yao Z."/>
            <person name="Shen Y."/>
            <person name="Qiang B."/>
            <person name="Hou Y."/>
            <person name="Yu J."/>
            <person name="Jin Q."/>
        </authorList>
    </citation>
    <scope>NUCLEOTIDE SEQUENCE [LARGE SCALE GENOMIC DNA]</scope>
    <source>
        <strain>Sd197</strain>
    </source>
</reference>
<accession>Q32FA7</accession>
<comment type="function">
    <text evidence="2">Multidrug efflux pump that functions probably as a Na(+)/drug antiporter.</text>
</comment>
<comment type="subcellular location">
    <subcellularLocation>
        <location evidence="2">Cell inner membrane</location>
        <topology evidence="2">Multi-pass membrane protein</topology>
    </subcellularLocation>
</comment>
<comment type="similarity">
    <text evidence="2">Belongs to the multi antimicrobial extrusion (MATE) (TC 2.A.66.1) family. MdtK subfamily.</text>
</comment>
<protein>
    <recommendedName>
        <fullName evidence="2">Multidrug resistance protein MdtK</fullName>
    </recommendedName>
    <alternativeName>
        <fullName evidence="2">Multidrug-efflux transporter</fullName>
    </alternativeName>
</protein>
<proteinExistence type="inferred from homology"/>
<keyword id="KW-0050">Antiport</keyword>
<keyword id="KW-0997">Cell inner membrane</keyword>
<keyword id="KW-1003">Cell membrane</keyword>
<keyword id="KW-0406">Ion transport</keyword>
<keyword id="KW-0472">Membrane</keyword>
<keyword id="KW-1185">Reference proteome</keyword>
<keyword id="KW-0915">Sodium</keyword>
<keyword id="KW-0739">Sodium transport</keyword>
<keyword id="KW-0812">Transmembrane</keyword>
<keyword id="KW-1133">Transmembrane helix</keyword>
<keyword id="KW-0813">Transport</keyword>
<dbReference type="EMBL" id="CP000034">
    <property type="protein sequence ID" value="ABB61998.1"/>
    <property type="molecule type" value="Genomic_DNA"/>
</dbReference>
<dbReference type="RefSeq" id="WP_001174959.1">
    <property type="nucleotide sequence ID" value="NC_007606.1"/>
</dbReference>
<dbReference type="RefSeq" id="YP_403489.1">
    <property type="nucleotide sequence ID" value="NC_007606.1"/>
</dbReference>
<dbReference type="SMR" id="Q32FA7"/>
<dbReference type="STRING" id="300267.SDY_1890"/>
<dbReference type="EnsemblBacteria" id="ABB61998">
    <property type="protein sequence ID" value="ABB61998"/>
    <property type="gene ID" value="SDY_1890"/>
</dbReference>
<dbReference type="KEGG" id="sdy:SDY_1890"/>
<dbReference type="PATRIC" id="fig|300267.13.peg.2275"/>
<dbReference type="HOGENOM" id="CLU_012893_6_0_6"/>
<dbReference type="Proteomes" id="UP000002716">
    <property type="component" value="Chromosome"/>
</dbReference>
<dbReference type="GO" id="GO:0005886">
    <property type="term" value="C:plasma membrane"/>
    <property type="evidence" value="ECO:0007669"/>
    <property type="project" value="UniProtKB-SubCell"/>
</dbReference>
<dbReference type="GO" id="GO:0015297">
    <property type="term" value="F:antiporter activity"/>
    <property type="evidence" value="ECO:0007669"/>
    <property type="project" value="UniProtKB-UniRule"/>
</dbReference>
<dbReference type="GO" id="GO:0042910">
    <property type="term" value="F:xenobiotic transmembrane transporter activity"/>
    <property type="evidence" value="ECO:0007669"/>
    <property type="project" value="UniProtKB-UniRule"/>
</dbReference>
<dbReference type="GO" id="GO:0006814">
    <property type="term" value="P:sodium ion transport"/>
    <property type="evidence" value="ECO:0007669"/>
    <property type="project" value="UniProtKB-UniRule"/>
</dbReference>
<dbReference type="GO" id="GO:0006855">
    <property type="term" value="P:xenobiotic transmembrane transport"/>
    <property type="evidence" value="ECO:0007669"/>
    <property type="project" value="UniProtKB-UniRule"/>
</dbReference>
<dbReference type="CDD" id="cd13131">
    <property type="entry name" value="MATE_NorM_like"/>
    <property type="match status" value="1"/>
</dbReference>
<dbReference type="HAMAP" id="MF_00400">
    <property type="entry name" value="MdtK"/>
    <property type="match status" value="1"/>
</dbReference>
<dbReference type="InterPro" id="IPR002528">
    <property type="entry name" value="MATE_fam"/>
</dbReference>
<dbReference type="InterPro" id="IPR050222">
    <property type="entry name" value="MATE_MdtK"/>
</dbReference>
<dbReference type="InterPro" id="IPR048279">
    <property type="entry name" value="MdtK-like"/>
</dbReference>
<dbReference type="InterPro" id="IPR022913">
    <property type="entry name" value="Multidrug-R_MdtK"/>
</dbReference>
<dbReference type="NCBIfam" id="TIGR00797">
    <property type="entry name" value="matE"/>
    <property type="match status" value="1"/>
</dbReference>
<dbReference type="PANTHER" id="PTHR43298:SF2">
    <property type="entry name" value="FMN_FAD EXPORTER YEEO-RELATED"/>
    <property type="match status" value="1"/>
</dbReference>
<dbReference type="PANTHER" id="PTHR43298">
    <property type="entry name" value="MULTIDRUG RESISTANCE PROTEIN NORM-RELATED"/>
    <property type="match status" value="1"/>
</dbReference>
<dbReference type="Pfam" id="PF01554">
    <property type="entry name" value="MatE"/>
    <property type="match status" value="2"/>
</dbReference>
<dbReference type="PIRSF" id="PIRSF006603">
    <property type="entry name" value="DinF"/>
    <property type="match status" value="1"/>
</dbReference>